<evidence type="ECO:0000255" key="1">
    <source>
        <dbReference type="HAMAP-Rule" id="MF_00550"/>
    </source>
</evidence>
<feature type="chain" id="PRO_1000061092" description="Peptidase T">
    <location>
        <begin position="1"/>
        <end position="409"/>
    </location>
</feature>
<feature type="active site" evidence="1">
    <location>
        <position position="82"/>
    </location>
</feature>
<feature type="active site" description="Proton acceptor" evidence="1">
    <location>
        <position position="177"/>
    </location>
</feature>
<feature type="binding site" evidence="1">
    <location>
        <position position="80"/>
    </location>
    <ligand>
        <name>Zn(2+)</name>
        <dbReference type="ChEBI" id="CHEBI:29105"/>
        <label>1</label>
    </ligand>
</feature>
<feature type="binding site" evidence="1">
    <location>
        <position position="143"/>
    </location>
    <ligand>
        <name>Zn(2+)</name>
        <dbReference type="ChEBI" id="CHEBI:29105"/>
        <label>1</label>
    </ligand>
</feature>
<feature type="binding site" evidence="1">
    <location>
        <position position="143"/>
    </location>
    <ligand>
        <name>Zn(2+)</name>
        <dbReference type="ChEBI" id="CHEBI:29105"/>
        <label>2</label>
    </ligand>
</feature>
<feature type="binding site" evidence="1">
    <location>
        <position position="178"/>
    </location>
    <ligand>
        <name>Zn(2+)</name>
        <dbReference type="ChEBI" id="CHEBI:29105"/>
        <label>2</label>
    </ligand>
</feature>
<feature type="binding site" evidence="1">
    <location>
        <position position="200"/>
    </location>
    <ligand>
        <name>Zn(2+)</name>
        <dbReference type="ChEBI" id="CHEBI:29105"/>
        <label>1</label>
    </ligand>
</feature>
<feature type="binding site" evidence="1">
    <location>
        <position position="382"/>
    </location>
    <ligand>
        <name>Zn(2+)</name>
        <dbReference type="ChEBI" id="CHEBI:29105"/>
        <label>2</label>
    </ligand>
</feature>
<gene>
    <name evidence="1" type="primary">pepT</name>
    <name type="ordered locus">Clos_0299</name>
</gene>
<dbReference type="EC" id="3.4.11.4" evidence="1"/>
<dbReference type="EMBL" id="CP000853">
    <property type="protein sequence ID" value="ABW17862.1"/>
    <property type="molecule type" value="Genomic_DNA"/>
</dbReference>
<dbReference type="RefSeq" id="WP_012158177.1">
    <property type="nucleotide sequence ID" value="NC_009922.1"/>
</dbReference>
<dbReference type="SMR" id="A8ML45"/>
<dbReference type="STRING" id="350688.Clos_0299"/>
<dbReference type="MEROPS" id="M20.003"/>
<dbReference type="KEGG" id="aoe:Clos_0299"/>
<dbReference type="eggNOG" id="COG2195">
    <property type="taxonomic scope" value="Bacteria"/>
</dbReference>
<dbReference type="HOGENOM" id="CLU_053676_0_0_9"/>
<dbReference type="OrthoDB" id="9804934at2"/>
<dbReference type="Proteomes" id="UP000000269">
    <property type="component" value="Chromosome"/>
</dbReference>
<dbReference type="GO" id="GO:0005829">
    <property type="term" value="C:cytosol"/>
    <property type="evidence" value="ECO:0007669"/>
    <property type="project" value="TreeGrafter"/>
</dbReference>
<dbReference type="GO" id="GO:0008237">
    <property type="term" value="F:metallopeptidase activity"/>
    <property type="evidence" value="ECO:0007669"/>
    <property type="project" value="UniProtKB-KW"/>
</dbReference>
<dbReference type="GO" id="GO:0045148">
    <property type="term" value="F:tripeptide aminopeptidase activity"/>
    <property type="evidence" value="ECO:0007669"/>
    <property type="project" value="UniProtKB-UniRule"/>
</dbReference>
<dbReference type="GO" id="GO:0008270">
    <property type="term" value="F:zinc ion binding"/>
    <property type="evidence" value="ECO:0007669"/>
    <property type="project" value="UniProtKB-UniRule"/>
</dbReference>
<dbReference type="GO" id="GO:0043171">
    <property type="term" value="P:peptide catabolic process"/>
    <property type="evidence" value="ECO:0007669"/>
    <property type="project" value="UniProtKB-UniRule"/>
</dbReference>
<dbReference type="GO" id="GO:0006508">
    <property type="term" value="P:proteolysis"/>
    <property type="evidence" value="ECO:0007669"/>
    <property type="project" value="UniProtKB-UniRule"/>
</dbReference>
<dbReference type="CDD" id="cd03892">
    <property type="entry name" value="M20_peptT"/>
    <property type="match status" value="1"/>
</dbReference>
<dbReference type="Gene3D" id="3.30.70.360">
    <property type="match status" value="1"/>
</dbReference>
<dbReference type="Gene3D" id="3.40.630.10">
    <property type="entry name" value="Zn peptidases"/>
    <property type="match status" value="1"/>
</dbReference>
<dbReference type="HAMAP" id="MF_00550">
    <property type="entry name" value="Aminopeptidase_M20"/>
    <property type="match status" value="1"/>
</dbReference>
<dbReference type="InterPro" id="IPR001261">
    <property type="entry name" value="ArgE/DapE_CS"/>
</dbReference>
<dbReference type="InterPro" id="IPR036264">
    <property type="entry name" value="Bact_exopeptidase_dim_dom"/>
</dbReference>
<dbReference type="InterPro" id="IPR002933">
    <property type="entry name" value="Peptidase_M20"/>
</dbReference>
<dbReference type="InterPro" id="IPR011650">
    <property type="entry name" value="Peptidase_M20_dimer"/>
</dbReference>
<dbReference type="InterPro" id="IPR010161">
    <property type="entry name" value="Peptidase_M20B"/>
</dbReference>
<dbReference type="NCBIfam" id="TIGR01882">
    <property type="entry name" value="peptidase-T"/>
    <property type="match status" value="1"/>
</dbReference>
<dbReference type="NCBIfam" id="NF003976">
    <property type="entry name" value="PRK05469.1"/>
    <property type="match status" value="1"/>
</dbReference>
<dbReference type="NCBIfam" id="NF009920">
    <property type="entry name" value="PRK13381.1"/>
    <property type="match status" value="1"/>
</dbReference>
<dbReference type="PANTHER" id="PTHR42994">
    <property type="entry name" value="PEPTIDASE T"/>
    <property type="match status" value="1"/>
</dbReference>
<dbReference type="PANTHER" id="PTHR42994:SF1">
    <property type="entry name" value="PEPTIDASE T"/>
    <property type="match status" value="1"/>
</dbReference>
<dbReference type="Pfam" id="PF07687">
    <property type="entry name" value="M20_dimer"/>
    <property type="match status" value="1"/>
</dbReference>
<dbReference type="Pfam" id="PF01546">
    <property type="entry name" value="Peptidase_M20"/>
    <property type="match status" value="1"/>
</dbReference>
<dbReference type="PIRSF" id="PIRSF037215">
    <property type="entry name" value="Peptidase_M20B"/>
    <property type="match status" value="1"/>
</dbReference>
<dbReference type="SUPFAM" id="SSF55031">
    <property type="entry name" value="Bacterial exopeptidase dimerisation domain"/>
    <property type="match status" value="1"/>
</dbReference>
<dbReference type="SUPFAM" id="SSF53187">
    <property type="entry name" value="Zn-dependent exopeptidases"/>
    <property type="match status" value="1"/>
</dbReference>
<dbReference type="PROSITE" id="PS00758">
    <property type="entry name" value="ARGE_DAPE_CPG2_1"/>
    <property type="match status" value="1"/>
</dbReference>
<dbReference type="PROSITE" id="PS00759">
    <property type="entry name" value="ARGE_DAPE_CPG2_2"/>
    <property type="match status" value="1"/>
</dbReference>
<protein>
    <recommendedName>
        <fullName evidence="1">Peptidase T</fullName>
        <ecNumber evidence="1">3.4.11.4</ecNumber>
    </recommendedName>
    <alternativeName>
        <fullName evidence="1">Aminotripeptidase</fullName>
        <shortName evidence="1">Tripeptidase</shortName>
    </alternativeName>
    <alternativeName>
        <fullName evidence="1">Tripeptide aminopeptidase</fullName>
    </alternativeName>
</protein>
<keyword id="KW-0031">Aminopeptidase</keyword>
<keyword id="KW-0963">Cytoplasm</keyword>
<keyword id="KW-0378">Hydrolase</keyword>
<keyword id="KW-0479">Metal-binding</keyword>
<keyword id="KW-0482">Metalloprotease</keyword>
<keyword id="KW-0645">Protease</keyword>
<keyword id="KW-1185">Reference proteome</keyword>
<keyword id="KW-0862">Zinc</keyword>
<proteinExistence type="inferred from homology"/>
<comment type="function">
    <text evidence="1">Cleaves the N-terminal amino acid of tripeptides.</text>
</comment>
<comment type="catalytic activity">
    <reaction evidence="1">
        <text>Release of the N-terminal residue from a tripeptide.</text>
        <dbReference type="EC" id="3.4.11.4"/>
    </reaction>
</comment>
<comment type="cofactor">
    <cofactor evidence="1">
        <name>Zn(2+)</name>
        <dbReference type="ChEBI" id="CHEBI:29105"/>
    </cofactor>
    <text evidence="1">Binds 2 Zn(2+) ions per subunit.</text>
</comment>
<comment type="subcellular location">
    <subcellularLocation>
        <location evidence="1">Cytoplasm</location>
    </subcellularLocation>
</comment>
<comment type="similarity">
    <text evidence="1">Belongs to the peptidase M20B family.</text>
</comment>
<name>PEPT_ALKOO</name>
<organism>
    <name type="scientific">Alkaliphilus oremlandii (strain OhILAs)</name>
    <name type="common">Clostridium oremlandii (strain OhILAs)</name>
    <dbReference type="NCBI Taxonomy" id="350688"/>
    <lineage>
        <taxon>Bacteria</taxon>
        <taxon>Bacillati</taxon>
        <taxon>Bacillota</taxon>
        <taxon>Clostridia</taxon>
        <taxon>Peptostreptococcales</taxon>
        <taxon>Natronincolaceae</taxon>
        <taxon>Alkaliphilus</taxon>
    </lineage>
</organism>
<accession>A8ML45</accession>
<sequence length="409" mass="45603">MKNMVQRFLKYVTIDTKSDHESESFPSTKSQFDLAKLLVEELKALGLEDAVMDENCYVMATLPSNCNTDKTIPTIGFIAHMDTSPDMSGKDVKPQMVENYDGQDIVLNQEKNIILSPTDFPDLKNYVGKTLITTDGTTLLGADNKAGIAEIISALEYLVQNPEVQHGTIKVAFTPDEEVGHGADRFDVEKFGADFAYTIDGGEIGELEYENFNAAGVKILVHGRNIHPGTAKNRMVNSMEIAMELHAMLPENQKPQYTEGYEGFFLLTGIRGDVEETKCGYIIRDHCKNKFEEKKSLIKNAVDFLNGKYGEGTINLTVTDNYFNMKEKIEPVMHIVETARTAMEEVGVTPIIKPIRGGTDGARLSFMGLPCPNIFTGGHNFHGKYEYICVESMYKATEVILKIIELYSK</sequence>
<reference key="1">
    <citation type="submission" date="2007-10" db="EMBL/GenBank/DDBJ databases">
        <title>Complete genome of Alkaliphilus oremlandii OhILAs.</title>
        <authorList>
            <person name="Copeland A."/>
            <person name="Lucas S."/>
            <person name="Lapidus A."/>
            <person name="Barry K."/>
            <person name="Detter J.C."/>
            <person name="Glavina del Rio T."/>
            <person name="Hammon N."/>
            <person name="Israni S."/>
            <person name="Dalin E."/>
            <person name="Tice H."/>
            <person name="Pitluck S."/>
            <person name="Chain P."/>
            <person name="Malfatti S."/>
            <person name="Shin M."/>
            <person name="Vergez L."/>
            <person name="Schmutz J."/>
            <person name="Larimer F."/>
            <person name="Land M."/>
            <person name="Hauser L."/>
            <person name="Kyrpides N."/>
            <person name="Mikhailova N."/>
            <person name="Stolz J.F."/>
            <person name="Dawson A."/>
            <person name="Fisher E."/>
            <person name="Crable B."/>
            <person name="Perera E."/>
            <person name="Lisak J."/>
            <person name="Ranganathan M."/>
            <person name="Basu P."/>
            <person name="Richardson P."/>
        </authorList>
    </citation>
    <scope>NUCLEOTIDE SEQUENCE [LARGE SCALE GENOMIC DNA]</scope>
    <source>
        <strain>OhILAs</strain>
    </source>
</reference>